<organism>
    <name type="scientific">Rhodococcus opacus (strain B4)</name>
    <dbReference type="NCBI Taxonomy" id="632772"/>
    <lineage>
        <taxon>Bacteria</taxon>
        <taxon>Bacillati</taxon>
        <taxon>Actinomycetota</taxon>
        <taxon>Actinomycetes</taxon>
        <taxon>Mycobacteriales</taxon>
        <taxon>Nocardiaceae</taxon>
        <taxon>Rhodococcus</taxon>
    </lineage>
</organism>
<accession>C1AZG0</accession>
<sequence>MSTSEFVLAQSATVPAPDIEYGQLSPMLIVFGVAVAGVLVEAFLPRRGRYSSHLVLALGGLTAAFVAVVLLAGTRDSVVGGAVAVDGPTLFLQGTILLISIPAILIIAERSVDSGVAAATAEVTAVRGAEPEGGTDAFTPQAFAVPGSVAEREATRNAPGHTEVFPLTLFAVGGMLLFPASNDLLTMFVALEVLSLPLYLLCGLARRRRLLSQEAALKYFLLGAFSSAFFLFGVALLYGYAGTVALPGIADALARGTEDRTLALIGTALLSVGLLFKIGAVPFHSWIPDVYQGAPTPITAFMAAATKVAAVGAMLRIFYVALPDLRADWRPVMWGVAILTMVVGAVMAVTQNDVKRMLAYSSVAHAGFILTGLVAANRAGLSSTMFYLLAYGFSTLGAFAVVTLVRDSRGEATDLSRWAGLGRRSPLVGGVFALFLLAFAGIPLTSGFVSKFAVFQAALEGGAVPLVLVGVVSSAIAAFFYVRVIVLMFFSEPQSDAPTIVVPSMFTAAAIAVGVVVTVVLGILPQGALDLADQAAVFFR</sequence>
<evidence type="ECO:0000255" key="1">
    <source>
        <dbReference type="HAMAP-Rule" id="MF_00445"/>
    </source>
</evidence>
<gene>
    <name evidence="1" type="primary">nuoN</name>
    <name type="ordered locus">ROP_59840</name>
</gene>
<proteinExistence type="inferred from homology"/>
<protein>
    <recommendedName>
        <fullName evidence="1">NADH-quinone oxidoreductase subunit N</fullName>
        <ecNumber evidence="1">7.1.1.-</ecNumber>
    </recommendedName>
    <alternativeName>
        <fullName evidence="1">NADH dehydrogenase I subunit N</fullName>
    </alternativeName>
    <alternativeName>
        <fullName evidence="1">NDH-1 subunit N</fullName>
    </alternativeName>
</protein>
<reference key="1">
    <citation type="submission" date="2009-03" db="EMBL/GenBank/DDBJ databases">
        <title>Comparison of the complete genome sequences of Rhodococcus erythropolis PR4 and Rhodococcus opacus B4.</title>
        <authorList>
            <person name="Takarada H."/>
            <person name="Sekine M."/>
            <person name="Hosoyama A."/>
            <person name="Yamada R."/>
            <person name="Fujisawa T."/>
            <person name="Omata S."/>
            <person name="Shimizu A."/>
            <person name="Tsukatani N."/>
            <person name="Tanikawa S."/>
            <person name="Fujita N."/>
            <person name="Harayama S."/>
        </authorList>
    </citation>
    <scope>NUCLEOTIDE SEQUENCE [LARGE SCALE GENOMIC DNA]</scope>
    <source>
        <strain>B4</strain>
    </source>
</reference>
<keyword id="KW-1003">Cell membrane</keyword>
<keyword id="KW-0472">Membrane</keyword>
<keyword id="KW-0520">NAD</keyword>
<keyword id="KW-0874">Quinone</keyword>
<keyword id="KW-1278">Translocase</keyword>
<keyword id="KW-0812">Transmembrane</keyword>
<keyword id="KW-1133">Transmembrane helix</keyword>
<keyword id="KW-0813">Transport</keyword>
<comment type="function">
    <text evidence="1">NDH-1 shuttles electrons from NADH, via FMN and iron-sulfur (Fe-S) centers, to quinones in the respiratory chain. The immediate electron acceptor for the enzyme in this species is believed to be a menaquinone. Couples the redox reaction to proton translocation (for every two electrons transferred, four hydrogen ions are translocated across the cytoplasmic membrane), and thus conserves the redox energy in a proton gradient.</text>
</comment>
<comment type="catalytic activity">
    <reaction evidence="1">
        <text>a quinone + NADH + 5 H(+)(in) = a quinol + NAD(+) + 4 H(+)(out)</text>
        <dbReference type="Rhea" id="RHEA:57888"/>
        <dbReference type="ChEBI" id="CHEBI:15378"/>
        <dbReference type="ChEBI" id="CHEBI:24646"/>
        <dbReference type="ChEBI" id="CHEBI:57540"/>
        <dbReference type="ChEBI" id="CHEBI:57945"/>
        <dbReference type="ChEBI" id="CHEBI:132124"/>
    </reaction>
</comment>
<comment type="subunit">
    <text evidence="1">NDH-1 is composed of 14 different subunits. Subunits NuoA, H, J, K, L, M, N constitute the membrane sector of the complex.</text>
</comment>
<comment type="subcellular location">
    <subcellularLocation>
        <location evidence="1">Cell membrane</location>
        <topology evidence="1">Multi-pass membrane protein</topology>
    </subcellularLocation>
</comment>
<comment type="similarity">
    <text evidence="1">Belongs to the complex I subunit 2 family.</text>
</comment>
<name>NUON_RHOOB</name>
<dbReference type="EC" id="7.1.1.-" evidence="1"/>
<dbReference type="EMBL" id="AP011115">
    <property type="protein sequence ID" value="BAH54231.1"/>
    <property type="molecule type" value="Genomic_DNA"/>
</dbReference>
<dbReference type="RefSeq" id="WP_015889721.1">
    <property type="nucleotide sequence ID" value="NC_012522.1"/>
</dbReference>
<dbReference type="SMR" id="C1AZG0"/>
<dbReference type="STRING" id="632772.ROP_59840"/>
<dbReference type="KEGG" id="rop:ROP_59840"/>
<dbReference type="PATRIC" id="fig|632772.20.peg.6250"/>
<dbReference type="HOGENOM" id="CLU_007100_1_1_11"/>
<dbReference type="OrthoDB" id="9811718at2"/>
<dbReference type="Proteomes" id="UP000002212">
    <property type="component" value="Chromosome"/>
</dbReference>
<dbReference type="GO" id="GO:0005886">
    <property type="term" value="C:plasma membrane"/>
    <property type="evidence" value="ECO:0007669"/>
    <property type="project" value="UniProtKB-SubCell"/>
</dbReference>
<dbReference type="GO" id="GO:0008137">
    <property type="term" value="F:NADH dehydrogenase (ubiquinone) activity"/>
    <property type="evidence" value="ECO:0007669"/>
    <property type="project" value="InterPro"/>
</dbReference>
<dbReference type="GO" id="GO:0050136">
    <property type="term" value="F:NADH:ubiquinone reductase (non-electrogenic) activity"/>
    <property type="evidence" value="ECO:0007669"/>
    <property type="project" value="UniProtKB-UniRule"/>
</dbReference>
<dbReference type="GO" id="GO:0048038">
    <property type="term" value="F:quinone binding"/>
    <property type="evidence" value="ECO:0007669"/>
    <property type="project" value="UniProtKB-KW"/>
</dbReference>
<dbReference type="GO" id="GO:0042773">
    <property type="term" value="P:ATP synthesis coupled electron transport"/>
    <property type="evidence" value="ECO:0007669"/>
    <property type="project" value="InterPro"/>
</dbReference>
<dbReference type="HAMAP" id="MF_00445">
    <property type="entry name" value="NDH1_NuoN_1"/>
    <property type="match status" value="1"/>
</dbReference>
<dbReference type="InterPro" id="IPR010096">
    <property type="entry name" value="NADH-Q_OxRdtase_suN/2"/>
</dbReference>
<dbReference type="InterPro" id="IPR001750">
    <property type="entry name" value="ND/Mrp_TM"/>
</dbReference>
<dbReference type="NCBIfam" id="TIGR01770">
    <property type="entry name" value="NDH_I_N"/>
    <property type="match status" value="1"/>
</dbReference>
<dbReference type="NCBIfam" id="NF004441">
    <property type="entry name" value="PRK05777.1-4"/>
    <property type="match status" value="1"/>
</dbReference>
<dbReference type="PANTHER" id="PTHR22773">
    <property type="entry name" value="NADH DEHYDROGENASE"/>
    <property type="match status" value="1"/>
</dbReference>
<dbReference type="Pfam" id="PF00361">
    <property type="entry name" value="Proton_antipo_M"/>
    <property type="match status" value="1"/>
</dbReference>
<feature type="chain" id="PRO_0000391212" description="NADH-quinone oxidoreductase subunit N">
    <location>
        <begin position="1"/>
        <end position="540"/>
    </location>
</feature>
<feature type="transmembrane region" description="Helical" evidence="1">
    <location>
        <begin position="24"/>
        <end position="44"/>
    </location>
</feature>
<feature type="transmembrane region" description="Helical" evidence="1">
    <location>
        <begin position="54"/>
        <end position="74"/>
    </location>
</feature>
<feature type="transmembrane region" description="Helical" evidence="1">
    <location>
        <begin position="88"/>
        <end position="108"/>
    </location>
</feature>
<feature type="transmembrane region" description="Helical" evidence="1">
    <location>
        <begin position="158"/>
        <end position="178"/>
    </location>
</feature>
<feature type="transmembrane region" description="Helical" evidence="1">
    <location>
        <begin position="184"/>
        <end position="204"/>
    </location>
</feature>
<feature type="transmembrane region" description="Helical" evidence="1">
    <location>
        <begin position="219"/>
        <end position="239"/>
    </location>
</feature>
<feature type="transmembrane region" description="Helical" evidence="1">
    <location>
        <begin position="263"/>
        <end position="283"/>
    </location>
</feature>
<feature type="transmembrane region" description="Helical" evidence="1">
    <location>
        <begin position="295"/>
        <end position="315"/>
    </location>
</feature>
<feature type="transmembrane region" description="Helical" evidence="1">
    <location>
        <begin position="331"/>
        <end position="351"/>
    </location>
</feature>
<feature type="transmembrane region" description="Helical" evidence="1">
    <location>
        <begin position="357"/>
        <end position="377"/>
    </location>
</feature>
<feature type="transmembrane region" description="Helical" evidence="1">
    <location>
        <begin position="385"/>
        <end position="405"/>
    </location>
</feature>
<feature type="transmembrane region" description="Helical" evidence="1">
    <location>
        <begin position="428"/>
        <end position="448"/>
    </location>
</feature>
<feature type="transmembrane region" description="Helical" evidence="1">
    <location>
        <begin position="462"/>
        <end position="482"/>
    </location>
</feature>
<feature type="transmembrane region" description="Helical" evidence="1">
    <location>
        <begin position="505"/>
        <end position="525"/>
    </location>
</feature>